<dbReference type="EMBL" id="BA000017">
    <property type="protein sequence ID" value="BAB56218.1"/>
    <property type="molecule type" value="Genomic_DNA"/>
</dbReference>
<dbReference type="EMBL" id="BA000017">
    <property type="protein sequence ID" value="BAB57821.1"/>
    <property type="molecule type" value="Genomic_DNA"/>
</dbReference>
<dbReference type="RefSeq" id="WP_000868132.1">
    <property type="nucleotide sequence ID" value="NC_002758.2"/>
</dbReference>
<dbReference type="SMR" id="P0A050"/>
<dbReference type="KEGG" id="sav:SAV0056"/>
<dbReference type="KEGG" id="sav:SAV1659"/>
<dbReference type="HOGENOM" id="CLU_027562_9_6_9"/>
<dbReference type="PhylomeDB" id="P0A050"/>
<dbReference type="Proteomes" id="UP000002481">
    <property type="component" value="Chromosome"/>
</dbReference>
<dbReference type="GO" id="GO:0003677">
    <property type="term" value="F:DNA binding"/>
    <property type="evidence" value="ECO:0007669"/>
    <property type="project" value="UniProtKB-KW"/>
</dbReference>
<dbReference type="GO" id="GO:0015074">
    <property type="term" value="P:DNA integration"/>
    <property type="evidence" value="ECO:0007669"/>
    <property type="project" value="UniProtKB-KW"/>
</dbReference>
<dbReference type="GO" id="GO:0006310">
    <property type="term" value="P:DNA recombination"/>
    <property type="evidence" value="ECO:0007669"/>
    <property type="project" value="UniProtKB-KW"/>
</dbReference>
<dbReference type="CDD" id="cd01186">
    <property type="entry name" value="INT_tnpA_C_Tn554"/>
    <property type="match status" value="1"/>
</dbReference>
<dbReference type="Gene3D" id="1.10.150.130">
    <property type="match status" value="1"/>
</dbReference>
<dbReference type="Gene3D" id="1.10.443.10">
    <property type="entry name" value="Intergrase catalytic core"/>
    <property type="match status" value="1"/>
</dbReference>
<dbReference type="InterPro" id="IPR044068">
    <property type="entry name" value="CB"/>
</dbReference>
<dbReference type="InterPro" id="IPR011010">
    <property type="entry name" value="DNA_brk_join_enz"/>
</dbReference>
<dbReference type="InterPro" id="IPR042721">
    <property type="entry name" value="INT_tnpA_C_Tn554"/>
</dbReference>
<dbReference type="InterPro" id="IPR013762">
    <property type="entry name" value="Integrase-like_cat_sf"/>
</dbReference>
<dbReference type="InterPro" id="IPR002104">
    <property type="entry name" value="Integrase_catalytic"/>
</dbReference>
<dbReference type="InterPro" id="IPR010998">
    <property type="entry name" value="Integrase_recombinase_N"/>
</dbReference>
<dbReference type="InterPro" id="IPR004107">
    <property type="entry name" value="Integrase_SAM-like_N"/>
</dbReference>
<dbReference type="InterPro" id="IPR050090">
    <property type="entry name" value="Tyrosine_recombinase_XerCD"/>
</dbReference>
<dbReference type="PANTHER" id="PTHR30349:SF41">
    <property type="entry name" value="INTEGRASE_RECOMBINASE PROTEIN MJ0367-RELATED"/>
    <property type="match status" value="1"/>
</dbReference>
<dbReference type="PANTHER" id="PTHR30349">
    <property type="entry name" value="PHAGE INTEGRASE-RELATED"/>
    <property type="match status" value="1"/>
</dbReference>
<dbReference type="Pfam" id="PF02899">
    <property type="entry name" value="Phage_int_SAM_1"/>
    <property type="match status" value="1"/>
</dbReference>
<dbReference type="Pfam" id="PF00589">
    <property type="entry name" value="Phage_integrase"/>
    <property type="match status" value="1"/>
</dbReference>
<dbReference type="SUPFAM" id="SSF56349">
    <property type="entry name" value="DNA breaking-rejoining enzymes"/>
    <property type="match status" value="1"/>
</dbReference>
<dbReference type="PROSITE" id="PS51900">
    <property type="entry name" value="CB"/>
    <property type="match status" value="1"/>
</dbReference>
<dbReference type="PROSITE" id="PS51898">
    <property type="entry name" value="TYR_RECOMBINASE"/>
    <property type="match status" value="1"/>
</dbReference>
<comment type="function">
    <text evidence="1">One of three proteins encoded by transposon Tn554 required for its transposition.</text>
</comment>
<comment type="similarity">
    <text evidence="4">Belongs to the 'phage' integrase family.</text>
</comment>
<accession>P0A050</accession>
<accession>P06696</accession>
<gene>
    <name type="primary">tnpA1</name>
    <name type="ordered locus">SAV0056</name>
</gene>
<gene>
    <name type="primary">tnpA2</name>
    <name type="ordered locus">SAV1659</name>
</gene>
<reference key="1">
    <citation type="journal article" date="2001" name="Lancet">
        <title>Whole genome sequencing of meticillin-resistant Staphylococcus aureus.</title>
        <authorList>
            <person name="Kuroda M."/>
            <person name="Ohta T."/>
            <person name="Uchiyama I."/>
            <person name="Baba T."/>
            <person name="Yuzawa H."/>
            <person name="Kobayashi I."/>
            <person name="Cui L."/>
            <person name="Oguchi A."/>
            <person name="Aoki K."/>
            <person name="Nagai Y."/>
            <person name="Lian J.-Q."/>
            <person name="Ito T."/>
            <person name="Kanamori M."/>
            <person name="Matsumaru H."/>
            <person name="Maruyama A."/>
            <person name="Murakami H."/>
            <person name="Hosoyama A."/>
            <person name="Mizutani-Ui Y."/>
            <person name="Takahashi N.K."/>
            <person name="Sawano T."/>
            <person name="Inoue R."/>
            <person name="Kaito C."/>
            <person name="Sekimizu K."/>
            <person name="Hirakawa H."/>
            <person name="Kuhara S."/>
            <person name="Goto S."/>
            <person name="Yabuzaki J."/>
            <person name="Kanehisa M."/>
            <person name="Yamashita A."/>
            <person name="Oshima K."/>
            <person name="Furuya K."/>
            <person name="Yoshino C."/>
            <person name="Shiba T."/>
            <person name="Hattori M."/>
            <person name="Ogasawara N."/>
            <person name="Hayashi H."/>
            <person name="Hiramatsu K."/>
        </authorList>
    </citation>
    <scope>NUCLEOTIDE SEQUENCE [LARGE SCALE GENOMIC DNA]</scope>
    <source>
        <strain>Mu50 / ATCC 700699</strain>
    </source>
</reference>
<sequence length="361" mass="42941">MKVQRIEVENKPYPLYLLLDKEYQLIEPVMKFIKYLDNTGKSPNTIKAYCYHLKLLYEFMEQRGVILNDINFELLADFVGWLRYPSASNVIDLQSKKAIREETTVNTILNVVMSFLDYLSRLGEFKSIDVFKQAKGRNFKGFLHHVNKGRYQKNVLKLRVKKKQIRTLRSKEVKQIIDACHTKRDKLILMLMYEGGLRIGEVLSLRLEDIVTWDNQIHLTPRDVNVNEAYIKLRKERTIHVSKELMSLYTDYLIYEYSEELEHDYVFISLKEGYFGKPLKYQSVLDLVRRIVKRTGIEFTSHMLRHTHATQLIREGWDVAFVQKRLGHAHVQTTLNTYVHLSDQDMKNEFNKYLERKEHKK</sequence>
<feature type="chain" id="PRO_0000197550" description="Transposase A from transposon Tn554">
    <location>
        <begin position="1"/>
        <end position="361"/>
    </location>
</feature>
<feature type="domain" description="Core-binding (CB)" evidence="3">
    <location>
        <begin position="23"/>
        <end position="120"/>
    </location>
</feature>
<feature type="domain" description="Tyr recombinase" evidence="2">
    <location>
        <begin position="163"/>
        <end position="351"/>
    </location>
</feature>
<feature type="active site" evidence="2">
    <location>
        <position position="198"/>
    </location>
</feature>
<feature type="active site" evidence="2">
    <location>
        <position position="232"/>
    </location>
</feature>
<feature type="active site" evidence="2">
    <location>
        <position position="302"/>
    </location>
</feature>
<feature type="active site" evidence="2">
    <location>
        <position position="305"/>
    </location>
</feature>
<feature type="active site" evidence="2">
    <location>
        <position position="328"/>
    </location>
</feature>
<feature type="active site" description="O-(3'-phospho-DNA)-tyrosine intermediate" evidence="2">
    <location>
        <position position="338"/>
    </location>
</feature>
<proteinExistence type="inferred from homology"/>
<name>TNPA_STAAM</name>
<organism>
    <name type="scientific">Staphylococcus aureus (strain Mu50 / ATCC 700699)</name>
    <dbReference type="NCBI Taxonomy" id="158878"/>
    <lineage>
        <taxon>Bacteria</taxon>
        <taxon>Bacillati</taxon>
        <taxon>Bacillota</taxon>
        <taxon>Bacilli</taxon>
        <taxon>Bacillales</taxon>
        <taxon>Staphylococcaceae</taxon>
        <taxon>Staphylococcus</taxon>
    </lineage>
</organism>
<evidence type="ECO:0000250" key="1"/>
<evidence type="ECO:0000255" key="2">
    <source>
        <dbReference type="PROSITE-ProRule" id="PRU01246"/>
    </source>
</evidence>
<evidence type="ECO:0000255" key="3">
    <source>
        <dbReference type="PROSITE-ProRule" id="PRU01248"/>
    </source>
</evidence>
<evidence type="ECO:0000305" key="4"/>
<keyword id="KW-0229">DNA integration</keyword>
<keyword id="KW-0233">DNA recombination</keyword>
<keyword id="KW-0238">DNA-binding</keyword>
<keyword id="KW-0814">Transposable element</keyword>
<protein>
    <recommendedName>
        <fullName>Transposase A from transposon Tn554</fullName>
    </recommendedName>
</protein>